<sequence>MSLWSSVKFAQRYAQLPKVFYRLVTPQPLDNNRWVIWNGELAQGFALPKHADDPQLLSVFSGAEPFSAFKPLAMKYAGHQFGVYNPDLGDGRGLLLGEMQNQQGQWFDIHLKGAGLTPFSRMGDGRAVLRSTLREYLCSEAMAALGIETTRALGMMVSDTPVYREQVEQGACLIRLAQTHIRFGHFEHFFYTEQYDELRLLADNVIEWYMPECTAHDKPYLAMFEQVVARTATMIAQWQAVGFAHGVMNTDNMSILGQTFDYGPFGFLDDYEPGYICNHSDYQGRYAFDQQPRVALWNLSALAHALSPLIERDDLELALAQYEPTLGKVFSQLMRQKLGLLSQQEGDSELFNAMFALLAENHTDYTRFFRTLSQLDREDEQTVIDLFIDRDAAHGWLSRYLERVAMEQTASGEAKSAQQRCEQMRAVNPKYILRNYLAQQAIDKAQQGDFSEVHTLAKLLKNPYDEQAEMEAYAHLPPEWGKKMVISCSS</sequence>
<keyword id="KW-0067">ATP-binding</keyword>
<keyword id="KW-0460">Magnesium</keyword>
<keyword id="KW-0464">Manganese</keyword>
<keyword id="KW-0479">Metal-binding</keyword>
<keyword id="KW-0547">Nucleotide-binding</keyword>
<keyword id="KW-0548">Nucleotidyltransferase</keyword>
<keyword id="KW-0808">Transferase</keyword>
<name>SELO_VIBVU</name>
<feature type="chain" id="PRO_0000121436" description="Protein nucleotidyltransferase YdiU">
    <location>
        <begin position="1"/>
        <end position="490"/>
    </location>
</feature>
<feature type="active site" description="Proton acceptor" evidence="1">
    <location>
        <position position="251"/>
    </location>
</feature>
<feature type="binding site" evidence="1">
    <location>
        <position position="89"/>
    </location>
    <ligand>
        <name>ATP</name>
        <dbReference type="ChEBI" id="CHEBI:30616"/>
    </ligand>
</feature>
<feature type="binding site" evidence="1">
    <location>
        <position position="91"/>
    </location>
    <ligand>
        <name>ATP</name>
        <dbReference type="ChEBI" id="CHEBI:30616"/>
    </ligand>
</feature>
<feature type="binding site" evidence="1">
    <location>
        <position position="92"/>
    </location>
    <ligand>
        <name>ATP</name>
        <dbReference type="ChEBI" id="CHEBI:30616"/>
    </ligand>
</feature>
<feature type="binding site" evidence="1">
    <location>
        <position position="112"/>
    </location>
    <ligand>
        <name>ATP</name>
        <dbReference type="ChEBI" id="CHEBI:30616"/>
    </ligand>
</feature>
<feature type="binding site" evidence="1">
    <location>
        <position position="124"/>
    </location>
    <ligand>
        <name>ATP</name>
        <dbReference type="ChEBI" id="CHEBI:30616"/>
    </ligand>
</feature>
<feature type="binding site" evidence="1">
    <location>
        <position position="125"/>
    </location>
    <ligand>
        <name>ATP</name>
        <dbReference type="ChEBI" id="CHEBI:30616"/>
    </ligand>
</feature>
<feature type="binding site" evidence="1">
    <location>
        <position position="175"/>
    </location>
    <ligand>
        <name>ATP</name>
        <dbReference type="ChEBI" id="CHEBI:30616"/>
    </ligand>
</feature>
<feature type="binding site" evidence="1">
    <location>
        <position position="182"/>
    </location>
    <ligand>
        <name>ATP</name>
        <dbReference type="ChEBI" id="CHEBI:30616"/>
    </ligand>
</feature>
<feature type="binding site" evidence="1">
    <location>
        <position position="252"/>
    </location>
    <ligand>
        <name>Mg(2+)</name>
        <dbReference type="ChEBI" id="CHEBI:18420"/>
    </ligand>
</feature>
<feature type="binding site" evidence="1">
    <location>
        <position position="261"/>
    </location>
    <ligand>
        <name>ATP</name>
        <dbReference type="ChEBI" id="CHEBI:30616"/>
    </ligand>
</feature>
<feature type="binding site" evidence="1">
    <location>
        <position position="261"/>
    </location>
    <ligand>
        <name>Mg(2+)</name>
        <dbReference type="ChEBI" id="CHEBI:18420"/>
    </ligand>
</feature>
<evidence type="ECO:0000255" key="1">
    <source>
        <dbReference type="HAMAP-Rule" id="MF_00692"/>
    </source>
</evidence>
<gene>
    <name evidence="1" type="primary">ydiU</name>
    <name evidence="1" type="synonym">selO</name>
    <name type="ordered locus">VV1_0039</name>
</gene>
<comment type="function">
    <text evidence="1">Nucleotidyltransferase involved in the post-translational modification of proteins. It can catalyze the addition of adenosine monophosphate (AMP) or uridine monophosphate (UMP) to a protein, resulting in modifications known as AMPylation and UMPylation.</text>
</comment>
<comment type="catalytic activity">
    <reaction evidence="1">
        <text>L-seryl-[protein] + ATP = 3-O-(5'-adenylyl)-L-seryl-[protein] + diphosphate</text>
        <dbReference type="Rhea" id="RHEA:58120"/>
        <dbReference type="Rhea" id="RHEA-COMP:9863"/>
        <dbReference type="Rhea" id="RHEA-COMP:15073"/>
        <dbReference type="ChEBI" id="CHEBI:29999"/>
        <dbReference type="ChEBI" id="CHEBI:30616"/>
        <dbReference type="ChEBI" id="CHEBI:33019"/>
        <dbReference type="ChEBI" id="CHEBI:142516"/>
        <dbReference type="EC" id="2.7.7.108"/>
    </reaction>
</comment>
<comment type="catalytic activity">
    <reaction evidence="1">
        <text>L-threonyl-[protein] + ATP = 3-O-(5'-adenylyl)-L-threonyl-[protein] + diphosphate</text>
        <dbReference type="Rhea" id="RHEA:54292"/>
        <dbReference type="Rhea" id="RHEA-COMP:11060"/>
        <dbReference type="Rhea" id="RHEA-COMP:13847"/>
        <dbReference type="ChEBI" id="CHEBI:30013"/>
        <dbReference type="ChEBI" id="CHEBI:30616"/>
        <dbReference type="ChEBI" id="CHEBI:33019"/>
        <dbReference type="ChEBI" id="CHEBI:138113"/>
        <dbReference type="EC" id="2.7.7.108"/>
    </reaction>
</comment>
<comment type="catalytic activity">
    <reaction evidence="1">
        <text>L-tyrosyl-[protein] + ATP = O-(5'-adenylyl)-L-tyrosyl-[protein] + diphosphate</text>
        <dbReference type="Rhea" id="RHEA:54288"/>
        <dbReference type="Rhea" id="RHEA-COMP:10136"/>
        <dbReference type="Rhea" id="RHEA-COMP:13846"/>
        <dbReference type="ChEBI" id="CHEBI:30616"/>
        <dbReference type="ChEBI" id="CHEBI:33019"/>
        <dbReference type="ChEBI" id="CHEBI:46858"/>
        <dbReference type="ChEBI" id="CHEBI:83624"/>
        <dbReference type="EC" id="2.7.7.108"/>
    </reaction>
</comment>
<comment type="catalytic activity">
    <reaction evidence="1">
        <text>L-histidyl-[protein] + UTP = N(tele)-(5'-uridylyl)-L-histidyl-[protein] + diphosphate</text>
        <dbReference type="Rhea" id="RHEA:83891"/>
        <dbReference type="Rhea" id="RHEA-COMP:9745"/>
        <dbReference type="Rhea" id="RHEA-COMP:20239"/>
        <dbReference type="ChEBI" id="CHEBI:29979"/>
        <dbReference type="ChEBI" id="CHEBI:33019"/>
        <dbReference type="ChEBI" id="CHEBI:46398"/>
        <dbReference type="ChEBI" id="CHEBI:233474"/>
    </reaction>
</comment>
<comment type="catalytic activity">
    <reaction evidence="1">
        <text>L-seryl-[protein] + UTP = O-(5'-uridylyl)-L-seryl-[protein] + diphosphate</text>
        <dbReference type="Rhea" id="RHEA:64604"/>
        <dbReference type="Rhea" id="RHEA-COMP:9863"/>
        <dbReference type="Rhea" id="RHEA-COMP:16635"/>
        <dbReference type="ChEBI" id="CHEBI:29999"/>
        <dbReference type="ChEBI" id="CHEBI:33019"/>
        <dbReference type="ChEBI" id="CHEBI:46398"/>
        <dbReference type="ChEBI" id="CHEBI:156051"/>
    </reaction>
</comment>
<comment type="catalytic activity">
    <reaction evidence="1">
        <text>L-tyrosyl-[protein] + UTP = O-(5'-uridylyl)-L-tyrosyl-[protein] + diphosphate</text>
        <dbReference type="Rhea" id="RHEA:83887"/>
        <dbReference type="Rhea" id="RHEA-COMP:10136"/>
        <dbReference type="Rhea" id="RHEA-COMP:20238"/>
        <dbReference type="ChEBI" id="CHEBI:33019"/>
        <dbReference type="ChEBI" id="CHEBI:46398"/>
        <dbReference type="ChEBI" id="CHEBI:46858"/>
        <dbReference type="ChEBI" id="CHEBI:90602"/>
    </reaction>
</comment>
<comment type="cofactor">
    <cofactor evidence="1">
        <name>Mg(2+)</name>
        <dbReference type="ChEBI" id="CHEBI:18420"/>
    </cofactor>
    <cofactor evidence="1">
        <name>Mn(2+)</name>
        <dbReference type="ChEBI" id="CHEBI:29035"/>
    </cofactor>
</comment>
<comment type="similarity">
    <text evidence="1">Belongs to the SELO family.</text>
</comment>
<organism>
    <name type="scientific">Vibrio vulnificus (strain CMCP6)</name>
    <dbReference type="NCBI Taxonomy" id="216895"/>
    <lineage>
        <taxon>Bacteria</taxon>
        <taxon>Pseudomonadati</taxon>
        <taxon>Pseudomonadota</taxon>
        <taxon>Gammaproteobacteria</taxon>
        <taxon>Vibrionales</taxon>
        <taxon>Vibrionaceae</taxon>
        <taxon>Vibrio</taxon>
    </lineage>
</organism>
<reference key="1">
    <citation type="submission" date="2002-12" db="EMBL/GenBank/DDBJ databases">
        <title>Complete genome sequence of Vibrio vulnificus CMCP6.</title>
        <authorList>
            <person name="Rhee J.H."/>
            <person name="Kim S.Y."/>
            <person name="Chung S.S."/>
            <person name="Kim J.J."/>
            <person name="Moon Y.H."/>
            <person name="Jeong H."/>
            <person name="Choy H.E."/>
        </authorList>
    </citation>
    <scope>NUCLEOTIDE SEQUENCE [LARGE SCALE GENOMIC DNA]</scope>
    <source>
        <strain>CMCP6</strain>
    </source>
</reference>
<accession>Q8DG12</accession>
<proteinExistence type="inferred from homology"/>
<protein>
    <recommendedName>
        <fullName evidence="1">Protein nucleotidyltransferase YdiU</fullName>
        <ecNumber evidence="1">2.7.7.-</ecNumber>
    </recommendedName>
    <alternativeName>
        <fullName evidence="1">Protein adenylyltransferase YdiU</fullName>
        <ecNumber evidence="1">2.7.7.108</ecNumber>
    </alternativeName>
    <alternativeName>
        <fullName evidence="1">Protein uridylyltransferase YdiU</fullName>
        <ecNumber evidence="1">2.7.7.-</ecNumber>
    </alternativeName>
</protein>
<dbReference type="EC" id="2.7.7.-" evidence="1"/>
<dbReference type="EC" id="2.7.7.108" evidence="1"/>
<dbReference type="EMBL" id="AE016795">
    <property type="protein sequence ID" value="AAO08581.1"/>
    <property type="molecule type" value="Genomic_DNA"/>
</dbReference>
<dbReference type="RefSeq" id="WP_011078163.1">
    <property type="nucleotide sequence ID" value="NC_004459.3"/>
</dbReference>
<dbReference type="SMR" id="Q8DG12"/>
<dbReference type="KEGG" id="vvu:VV1_0039"/>
<dbReference type="HOGENOM" id="CLU_010245_4_0_6"/>
<dbReference type="Proteomes" id="UP000002275">
    <property type="component" value="Chromosome 1"/>
</dbReference>
<dbReference type="GO" id="GO:0070733">
    <property type="term" value="F:AMPylase activity"/>
    <property type="evidence" value="ECO:0007669"/>
    <property type="project" value="RHEA"/>
</dbReference>
<dbReference type="GO" id="GO:0005524">
    <property type="term" value="F:ATP binding"/>
    <property type="evidence" value="ECO:0007669"/>
    <property type="project" value="UniProtKB-UniRule"/>
</dbReference>
<dbReference type="GO" id="GO:0000287">
    <property type="term" value="F:magnesium ion binding"/>
    <property type="evidence" value="ECO:0007669"/>
    <property type="project" value="UniProtKB-UniRule"/>
</dbReference>
<dbReference type="HAMAP" id="MF_00692">
    <property type="entry name" value="YdiU_SelO"/>
    <property type="match status" value="1"/>
</dbReference>
<dbReference type="InterPro" id="IPR003846">
    <property type="entry name" value="SelO"/>
</dbReference>
<dbReference type="NCBIfam" id="NF000658">
    <property type="entry name" value="PRK00029.1"/>
    <property type="match status" value="1"/>
</dbReference>
<dbReference type="PANTHER" id="PTHR32057">
    <property type="entry name" value="PROTEIN ADENYLYLTRANSFERASE SELO, MITOCHONDRIAL"/>
    <property type="match status" value="1"/>
</dbReference>
<dbReference type="PANTHER" id="PTHR32057:SF14">
    <property type="entry name" value="PROTEIN ADENYLYLTRANSFERASE SELO, MITOCHONDRIAL"/>
    <property type="match status" value="1"/>
</dbReference>
<dbReference type="Pfam" id="PF02696">
    <property type="entry name" value="SelO"/>
    <property type="match status" value="1"/>
</dbReference>